<dbReference type="EC" id="2.8.3.16" evidence="2"/>
<dbReference type="EMBL" id="CU928160">
    <property type="protein sequence ID" value="CAQ99281.1"/>
    <property type="molecule type" value="Genomic_DNA"/>
</dbReference>
<dbReference type="RefSeq" id="WP_000106759.1">
    <property type="nucleotide sequence ID" value="NC_011741.1"/>
</dbReference>
<dbReference type="SMR" id="B7M6P3"/>
<dbReference type="GeneID" id="75202557"/>
<dbReference type="KEGG" id="ecr:ECIAI1_2439"/>
<dbReference type="HOGENOM" id="CLU_033975_2_1_6"/>
<dbReference type="UniPathway" id="UPA00540">
    <property type="reaction ID" value="UER00598"/>
</dbReference>
<dbReference type="GO" id="GO:0033608">
    <property type="term" value="F:formyl-CoA transferase activity"/>
    <property type="evidence" value="ECO:0007669"/>
    <property type="project" value="UniProtKB-EC"/>
</dbReference>
<dbReference type="GO" id="GO:0033611">
    <property type="term" value="P:oxalate catabolic process"/>
    <property type="evidence" value="ECO:0007669"/>
    <property type="project" value="UniProtKB-UniRule"/>
</dbReference>
<dbReference type="Gene3D" id="3.40.50.10540">
    <property type="entry name" value="Crotonobetainyl-coa:carnitine coa-transferase, domain 1"/>
    <property type="match status" value="1"/>
</dbReference>
<dbReference type="Gene3D" id="3.30.1540.10">
    <property type="entry name" value="formyl-coa transferase, domain 3"/>
    <property type="match status" value="1"/>
</dbReference>
<dbReference type="HAMAP" id="MF_00742">
    <property type="entry name" value="Formyl_CoA_transfer"/>
    <property type="match status" value="1"/>
</dbReference>
<dbReference type="InterPro" id="IPR050483">
    <property type="entry name" value="CoA-transferase_III_domain"/>
</dbReference>
<dbReference type="InterPro" id="IPR003673">
    <property type="entry name" value="CoA-Trfase_fam_III"/>
</dbReference>
<dbReference type="InterPro" id="IPR044855">
    <property type="entry name" value="CoA-Trfase_III_dom3_sf"/>
</dbReference>
<dbReference type="InterPro" id="IPR023606">
    <property type="entry name" value="CoA-Trfase_III_dom_1_sf"/>
</dbReference>
<dbReference type="InterPro" id="IPR017659">
    <property type="entry name" value="Formyl_CoA_transfer"/>
</dbReference>
<dbReference type="NCBIfam" id="TIGR03253">
    <property type="entry name" value="oxalate_frc"/>
    <property type="match status" value="1"/>
</dbReference>
<dbReference type="NCBIfam" id="NF003809">
    <property type="entry name" value="PRK05398.1"/>
    <property type="match status" value="1"/>
</dbReference>
<dbReference type="PANTHER" id="PTHR48207">
    <property type="entry name" value="SUCCINATE--HYDROXYMETHYLGLUTARATE COA-TRANSFERASE"/>
    <property type="match status" value="1"/>
</dbReference>
<dbReference type="PANTHER" id="PTHR48207:SF3">
    <property type="entry name" value="SUCCINATE--HYDROXYMETHYLGLUTARATE COA-TRANSFERASE"/>
    <property type="match status" value="1"/>
</dbReference>
<dbReference type="Pfam" id="PF02515">
    <property type="entry name" value="CoA_transf_3"/>
    <property type="match status" value="1"/>
</dbReference>
<dbReference type="SUPFAM" id="SSF89796">
    <property type="entry name" value="CoA-transferase family III (CaiB/BaiF)"/>
    <property type="match status" value="1"/>
</dbReference>
<sequence length="416" mass="45828">MSTPLQGIKVLDFTGVQSGPSCTQMLAWFGADVIKIERPGVGDVTRHQLRDIPDIDALYFTMLNSNKRSIELNTKTAEGKEVMEKLIREADILVENFHPGAIDHMGFTWEHIQEINPRLIFGSIKGFDECSPYVNVKAYENVAQAAGGAASTTGFWDGPPLVSAAALGDSNTGMHLLIGLLAALLHREKTGRGQRVTMSMQDAVLNLCRVKLRDQQRLDKLGYLEEYPQYPNGTFGDAVPRGGNAGGGGQPGWILKCKGWETDPNAYIYFTIQEQNWENTCKAIGKPEWITDPAYSTAHARQPHIFDIFAEIEKYTVTIDKHEAVAYLTQFDIPCAPVLSMKEISLDPSLRQSGSVVEVEQPLRGKYLTVGCPMKFSAFTPDIKAAPLLGEHTAAVLQELGYSDDEIAAMKQNHAI</sequence>
<feature type="chain" id="PRO_1000133196" description="Formyl-CoA:oxalate CoA-transferase">
    <location>
        <begin position="1"/>
        <end position="416"/>
    </location>
</feature>
<feature type="active site" description="Nucleophile" evidence="2">
    <location>
        <position position="169"/>
    </location>
</feature>
<feature type="binding site" evidence="1">
    <location>
        <begin position="17"/>
        <end position="18"/>
    </location>
    <ligand>
        <name>CoA</name>
        <dbReference type="ChEBI" id="CHEBI:57287"/>
    </ligand>
</feature>
<feature type="binding site" evidence="2">
    <location>
        <position position="38"/>
    </location>
    <ligand>
        <name>CoA</name>
        <dbReference type="ChEBI" id="CHEBI:57287"/>
    </ligand>
</feature>
<feature type="binding site" evidence="1">
    <location>
        <begin position="72"/>
        <end position="75"/>
    </location>
    <ligand>
        <name>CoA</name>
        <dbReference type="ChEBI" id="CHEBI:57287"/>
    </ligand>
</feature>
<feature type="binding site" evidence="1">
    <location>
        <begin position="96"/>
        <end position="98"/>
    </location>
    <ligand>
        <name>CoA</name>
        <dbReference type="ChEBI" id="CHEBI:57287"/>
    </ligand>
</feature>
<feature type="binding site" evidence="2">
    <location>
        <position position="104"/>
    </location>
    <ligand>
        <name>CoA</name>
        <dbReference type="ChEBI" id="CHEBI:57287"/>
    </ligand>
</feature>
<feature type="binding site" evidence="1">
    <location>
        <begin position="137"/>
        <end position="140"/>
    </location>
    <ligand>
        <name>CoA</name>
        <dbReference type="ChEBI" id="CHEBI:57287"/>
    </ligand>
</feature>
<feature type="binding site" evidence="1">
    <location>
        <begin position="248"/>
        <end position="250"/>
    </location>
    <ligand>
        <name>substrate</name>
    </ligand>
</feature>
<feature type="binding site" evidence="1">
    <location>
        <begin position="273"/>
        <end position="275"/>
    </location>
    <ligand>
        <name>CoA</name>
        <dbReference type="ChEBI" id="CHEBI:57287"/>
    </ligand>
</feature>
<evidence type="ECO:0000250" key="1"/>
<evidence type="ECO:0000255" key="2">
    <source>
        <dbReference type="HAMAP-Rule" id="MF_00742"/>
    </source>
</evidence>
<proteinExistence type="inferred from homology"/>
<comment type="function">
    <text evidence="1">Involved in the catabolism of oxalate and in the adapatation to low pH via the induction of the oxalate-dependent acid tolerance response (ATR). Catalyzes the transfer of the CoA moiety from formyl-CoA to oxalate (By similarity).</text>
</comment>
<comment type="catalytic activity">
    <reaction evidence="2">
        <text>formyl-CoA + oxalate = oxalyl-CoA + formate</text>
        <dbReference type="Rhea" id="RHEA:16545"/>
        <dbReference type="ChEBI" id="CHEBI:15740"/>
        <dbReference type="ChEBI" id="CHEBI:30623"/>
        <dbReference type="ChEBI" id="CHEBI:57376"/>
        <dbReference type="ChEBI" id="CHEBI:57388"/>
        <dbReference type="EC" id="2.8.3.16"/>
    </reaction>
</comment>
<comment type="pathway">
    <text evidence="2">Metabolic intermediate degradation; oxalate degradation; CO(2) and formate from oxalate: step 1/2.</text>
</comment>
<comment type="subunit">
    <text evidence="2">Homodimer.</text>
</comment>
<comment type="similarity">
    <text evidence="2">Belongs to the CoA-transferase III family. Frc subfamily.</text>
</comment>
<gene>
    <name evidence="2" type="primary">frc</name>
    <name type="ordered locus">ECIAI1_2439</name>
</gene>
<reference key="1">
    <citation type="journal article" date="2009" name="PLoS Genet.">
        <title>Organised genome dynamics in the Escherichia coli species results in highly diverse adaptive paths.</title>
        <authorList>
            <person name="Touchon M."/>
            <person name="Hoede C."/>
            <person name="Tenaillon O."/>
            <person name="Barbe V."/>
            <person name="Baeriswyl S."/>
            <person name="Bidet P."/>
            <person name="Bingen E."/>
            <person name="Bonacorsi S."/>
            <person name="Bouchier C."/>
            <person name="Bouvet O."/>
            <person name="Calteau A."/>
            <person name="Chiapello H."/>
            <person name="Clermont O."/>
            <person name="Cruveiller S."/>
            <person name="Danchin A."/>
            <person name="Diard M."/>
            <person name="Dossat C."/>
            <person name="Karoui M.E."/>
            <person name="Frapy E."/>
            <person name="Garry L."/>
            <person name="Ghigo J.M."/>
            <person name="Gilles A.M."/>
            <person name="Johnson J."/>
            <person name="Le Bouguenec C."/>
            <person name="Lescat M."/>
            <person name="Mangenot S."/>
            <person name="Martinez-Jehanne V."/>
            <person name="Matic I."/>
            <person name="Nassif X."/>
            <person name="Oztas S."/>
            <person name="Petit M.A."/>
            <person name="Pichon C."/>
            <person name="Rouy Z."/>
            <person name="Ruf C.S."/>
            <person name="Schneider D."/>
            <person name="Tourret J."/>
            <person name="Vacherie B."/>
            <person name="Vallenet D."/>
            <person name="Medigue C."/>
            <person name="Rocha E.P.C."/>
            <person name="Denamur E."/>
        </authorList>
    </citation>
    <scope>NUCLEOTIDE SEQUENCE [LARGE SCALE GENOMIC DNA]</scope>
    <source>
        <strain>IAI1</strain>
    </source>
</reference>
<protein>
    <recommendedName>
        <fullName>Formyl-CoA:oxalate CoA-transferase</fullName>
        <shortName>FCOCT</shortName>
        <ecNumber evidence="2">2.8.3.16</ecNumber>
    </recommendedName>
    <alternativeName>
        <fullName evidence="2">Formyl-coenzyme A transferase</fullName>
        <shortName evidence="2">Formyl-CoA transferase</shortName>
    </alternativeName>
</protein>
<organism>
    <name type="scientific">Escherichia coli O8 (strain IAI1)</name>
    <dbReference type="NCBI Taxonomy" id="585034"/>
    <lineage>
        <taxon>Bacteria</taxon>
        <taxon>Pseudomonadati</taxon>
        <taxon>Pseudomonadota</taxon>
        <taxon>Gammaproteobacteria</taxon>
        <taxon>Enterobacterales</taxon>
        <taxon>Enterobacteriaceae</taxon>
        <taxon>Escherichia</taxon>
    </lineage>
</organism>
<keyword id="KW-0808">Transferase</keyword>
<accession>B7M6P3</accession>
<name>FCTA_ECO8A</name>